<feature type="chain" id="PRO_0000276220" description="Photosystem II reaction center protein L">
    <location>
        <begin position="1"/>
        <end position="38"/>
    </location>
</feature>
<feature type="transmembrane region" description="Helical" evidence="1">
    <location>
        <begin position="17"/>
        <end position="37"/>
    </location>
</feature>
<proteinExistence type="inferred from homology"/>
<reference key="1">
    <citation type="journal article" date="2005" name="Mol. Biol. Evol.">
        <title>The chloroplast genome sequence of the green alga Pseudendoclonium akinetum (Ulvophyceae) reveals unusual structural features and new insights into the branching order of chlorophyte lineages.</title>
        <authorList>
            <person name="Pombert J.-F."/>
            <person name="Otis C."/>
            <person name="Lemieux C."/>
            <person name="Turmel M."/>
        </authorList>
    </citation>
    <scope>NUCLEOTIDE SEQUENCE [LARGE SCALE GENOMIC DNA]</scope>
    <source>
        <strain>UTEX 1912</strain>
    </source>
</reference>
<geneLocation type="chloroplast"/>
<dbReference type="EMBL" id="AY835431">
    <property type="protein sequence ID" value="AAV80669.1"/>
    <property type="molecule type" value="Genomic_DNA"/>
</dbReference>
<dbReference type="RefSeq" id="YP_636247.1">
    <property type="nucleotide sequence ID" value="NC_008114.1"/>
</dbReference>
<dbReference type="SMR" id="Q3ZJ20"/>
<dbReference type="GeneID" id="4108713"/>
<dbReference type="GO" id="GO:0009535">
    <property type="term" value="C:chloroplast thylakoid membrane"/>
    <property type="evidence" value="ECO:0007669"/>
    <property type="project" value="UniProtKB-SubCell"/>
</dbReference>
<dbReference type="GO" id="GO:0009539">
    <property type="term" value="C:photosystem II reaction center"/>
    <property type="evidence" value="ECO:0007669"/>
    <property type="project" value="InterPro"/>
</dbReference>
<dbReference type="GO" id="GO:0015979">
    <property type="term" value="P:photosynthesis"/>
    <property type="evidence" value="ECO:0007669"/>
    <property type="project" value="UniProtKB-UniRule"/>
</dbReference>
<dbReference type="HAMAP" id="MF_01317">
    <property type="entry name" value="PSII_PsbL"/>
    <property type="match status" value="1"/>
</dbReference>
<dbReference type="InterPro" id="IPR003372">
    <property type="entry name" value="PSII_PsbL"/>
</dbReference>
<dbReference type="InterPro" id="IPR037266">
    <property type="entry name" value="PSII_PsbL_sf"/>
</dbReference>
<dbReference type="NCBIfam" id="NF001972">
    <property type="entry name" value="PRK00753.1"/>
    <property type="match status" value="1"/>
</dbReference>
<dbReference type="Pfam" id="PF02419">
    <property type="entry name" value="PsbL"/>
    <property type="match status" value="1"/>
</dbReference>
<dbReference type="SUPFAM" id="SSF161017">
    <property type="entry name" value="Photosystem II reaction center protein L, PsbL"/>
    <property type="match status" value="1"/>
</dbReference>
<protein>
    <recommendedName>
        <fullName evidence="1">Photosystem II reaction center protein L</fullName>
        <shortName evidence="1">PSII-L</shortName>
    </recommendedName>
</protein>
<name>PSBL_TUPAK</name>
<keyword id="KW-0150">Chloroplast</keyword>
<keyword id="KW-0472">Membrane</keyword>
<keyword id="KW-0602">Photosynthesis</keyword>
<keyword id="KW-0604">Photosystem II</keyword>
<keyword id="KW-0934">Plastid</keyword>
<keyword id="KW-0674">Reaction center</keyword>
<keyword id="KW-0793">Thylakoid</keyword>
<keyword id="KW-0812">Transmembrane</keyword>
<keyword id="KW-1133">Transmembrane helix</keyword>
<accession>Q3ZJ20</accession>
<comment type="function">
    <text evidence="1">One of the components of the core complex of photosystem II (PSII). PSII is a light-driven water:plastoquinone oxidoreductase that uses light energy to abstract electrons from H(2)O, generating O(2) and a proton gradient subsequently used for ATP formation. It consists of a core antenna complex that captures photons, and an electron transfer chain that converts photonic excitation into a charge separation. This subunit is found at the monomer-monomer interface and is required for correct PSII assembly and/or dimerization.</text>
</comment>
<comment type="subunit">
    <text evidence="1">PSII is composed of 1 copy each of membrane proteins PsbA, PsbB, PsbC, PsbD, PsbE, PsbF, PsbH, PsbI, PsbJ, PsbK, PsbL, PsbM, PsbT, PsbX, PsbY, PsbZ, Psb30/Ycf12, at least 3 peripheral proteins of the oxygen-evolving complex and a large number of cofactors. It forms dimeric complexes.</text>
</comment>
<comment type="subcellular location">
    <subcellularLocation>
        <location evidence="1">Plastid</location>
        <location evidence="1">Chloroplast thylakoid membrane</location>
        <topology evidence="1">Single-pass membrane protein</topology>
    </subcellularLocation>
</comment>
<comment type="similarity">
    <text evidence="1">Belongs to the PsbL family.</text>
</comment>
<gene>
    <name evidence="1" type="primary">psbL</name>
</gene>
<evidence type="ECO:0000255" key="1">
    <source>
        <dbReference type="HAMAP-Rule" id="MF_01317"/>
    </source>
</evidence>
<sequence>MNKPNPNKQTVELNRTSLYWGLLLIFVLAVLFSSYIFN</sequence>
<organism>
    <name type="scientific">Tupiella akineta</name>
    <name type="common">Green alga</name>
    <name type="synonym">Pseudendoclonium akinetum</name>
    <dbReference type="NCBI Taxonomy" id="160070"/>
    <lineage>
        <taxon>Eukaryota</taxon>
        <taxon>Viridiplantae</taxon>
        <taxon>Chlorophyta</taxon>
        <taxon>Ulvophyceae</taxon>
        <taxon>OUU clade</taxon>
        <taxon>Ulotrichales</taxon>
        <taxon>Tupiellaceae</taxon>
        <taxon>Tupiella</taxon>
    </lineage>
</organism>